<gene>
    <name evidence="1" type="primary">rpmI</name>
    <name type="ordered locus">YPO2431</name>
    <name type="ordered locus">y1904.1</name>
    <name type="ordered locus">YP_2219</name>
</gene>
<organism>
    <name type="scientific">Yersinia pestis</name>
    <dbReference type="NCBI Taxonomy" id="632"/>
    <lineage>
        <taxon>Bacteria</taxon>
        <taxon>Pseudomonadati</taxon>
        <taxon>Pseudomonadota</taxon>
        <taxon>Gammaproteobacteria</taxon>
        <taxon>Enterobacterales</taxon>
        <taxon>Yersiniaceae</taxon>
        <taxon>Yersinia</taxon>
    </lineage>
</organism>
<dbReference type="EMBL" id="AL590842">
    <property type="protein sequence ID" value="CAL21059.1"/>
    <property type="molecule type" value="Genomic_DNA"/>
</dbReference>
<dbReference type="EMBL" id="AE009952">
    <property type="status" value="NOT_ANNOTATED_CDS"/>
    <property type="molecule type" value="Genomic_DNA"/>
</dbReference>
<dbReference type="EMBL" id="AE017042">
    <property type="protein sequence ID" value="AAS62425.1"/>
    <property type="molecule type" value="Genomic_DNA"/>
</dbReference>
<dbReference type="PIR" id="AH0296">
    <property type="entry name" value="AH0296"/>
</dbReference>
<dbReference type="RefSeq" id="WP_002211834.1">
    <property type="nucleotide sequence ID" value="NZ_WUCM01000025.1"/>
</dbReference>
<dbReference type="RefSeq" id="YP_002347395.1">
    <property type="nucleotide sequence ID" value="NC_003143.1"/>
</dbReference>
<dbReference type="SMR" id="Q8ZDW7"/>
<dbReference type="STRING" id="214092.YPO2431"/>
<dbReference type="PaxDb" id="214092-YPO2431"/>
<dbReference type="EnsemblBacteria" id="AAS62425">
    <property type="protein sequence ID" value="AAS62425"/>
    <property type="gene ID" value="YP_2219"/>
</dbReference>
<dbReference type="GeneID" id="97456073"/>
<dbReference type="KEGG" id="ype:YPO2431"/>
<dbReference type="KEGG" id="ypm:YP_2219"/>
<dbReference type="PATRIC" id="fig|1028802.3.peg.713"/>
<dbReference type="eggNOG" id="COG0291">
    <property type="taxonomic scope" value="Bacteria"/>
</dbReference>
<dbReference type="HOGENOM" id="CLU_169643_1_1_6"/>
<dbReference type="OMA" id="PKIKTHR"/>
<dbReference type="OrthoDB" id="47476at2"/>
<dbReference type="Proteomes" id="UP000000815">
    <property type="component" value="Chromosome"/>
</dbReference>
<dbReference type="Proteomes" id="UP000001019">
    <property type="component" value="Chromosome"/>
</dbReference>
<dbReference type="Proteomes" id="UP000002490">
    <property type="component" value="Chromosome"/>
</dbReference>
<dbReference type="GO" id="GO:0022625">
    <property type="term" value="C:cytosolic large ribosomal subunit"/>
    <property type="evidence" value="ECO:0000318"/>
    <property type="project" value="GO_Central"/>
</dbReference>
<dbReference type="GO" id="GO:0003735">
    <property type="term" value="F:structural constituent of ribosome"/>
    <property type="evidence" value="ECO:0000318"/>
    <property type="project" value="GO_Central"/>
</dbReference>
<dbReference type="GO" id="GO:0006412">
    <property type="term" value="P:translation"/>
    <property type="evidence" value="ECO:0007669"/>
    <property type="project" value="UniProtKB-UniRule"/>
</dbReference>
<dbReference type="FunFam" id="4.10.410.60:FF:000001">
    <property type="entry name" value="50S ribosomal protein L35"/>
    <property type="match status" value="1"/>
</dbReference>
<dbReference type="Gene3D" id="4.10.410.60">
    <property type="match status" value="1"/>
</dbReference>
<dbReference type="HAMAP" id="MF_00514">
    <property type="entry name" value="Ribosomal_bL35"/>
    <property type="match status" value="1"/>
</dbReference>
<dbReference type="InterPro" id="IPR001706">
    <property type="entry name" value="Ribosomal_bL35"/>
</dbReference>
<dbReference type="InterPro" id="IPR021137">
    <property type="entry name" value="Ribosomal_bL35-like"/>
</dbReference>
<dbReference type="InterPro" id="IPR018265">
    <property type="entry name" value="Ribosomal_bL35_CS"/>
</dbReference>
<dbReference type="InterPro" id="IPR037229">
    <property type="entry name" value="Ribosomal_bL35_sf"/>
</dbReference>
<dbReference type="NCBIfam" id="TIGR00001">
    <property type="entry name" value="rpmI_bact"/>
    <property type="match status" value="1"/>
</dbReference>
<dbReference type="PANTHER" id="PTHR33343">
    <property type="entry name" value="54S RIBOSOMAL PROTEIN BL35M"/>
    <property type="match status" value="1"/>
</dbReference>
<dbReference type="PANTHER" id="PTHR33343:SF1">
    <property type="entry name" value="LARGE RIBOSOMAL SUBUNIT PROTEIN BL35M"/>
    <property type="match status" value="1"/>
</dbReference>
<dbReference type="Pfam" id="PF01632">
    <property type="entry name" value="Ribosomal_L35p"/>
    <property type="match status" value="1"/>
</dbReference>
<dbReference type="PRINTS" id="PR00064">
    <property type="entry name" value="RIBOSOMALL35"/>
</dbReference>
<dbReference type="SUPFAM" id="SSF143034">
    <property type="entry name" value="L35p-like"/>
    <property type="match status" value="1"/>
</dbReference>
<dbReference type="PROSITE" id="PS00936">
    <property type="entry name" value="RIBOSOMAL_L35"/>
    <property type="match status" value="1"/>
</dbReference>
<feature type="chain" id="PRO_0000177463" description="Large ribosomal subunit protein bL35">
    <location>
        <begin position="1"/>
        <end position="65"/>
    </location>
</feature>
<accession>Q8ZDW7</accession>
<accession>Q0WE93</accession>
<sequence>MPKIKTVRGAAKRFKKTANGGFKRKHANLRHILTKKATKRKRHLRPKGLVSKNDLGLVVACLPYA</sequence>
<keyword id="KW-1185">Reference proteome</keyword>
<keyword id="KW-0687">Ribonucleoprotein</keyword>
<keyword id="KW-0689">Ribosomal protein</keyword>
<evidence type="ECO:0000255" key="1">
    <source>
        <dbReference type="HAMAP-Rule" id="MF_00514"/>
    </source>
</evidence>
<evidence type="ECO:0000305" key="2"/>
<name>RL35_YERPE</name>
<reference key="1">
    <citation type="journal article" date="2001" name="Nature">
        <title>Genome sequence of Yersinia pestis, the causative agent of plague.</title>
        <authorList>
            <person name="Parkhill J."/>
            <person name="Wren B.W."/>
            <person name="Thomson N.R."/>
            <person name="Titball R.W."/>
            <person name="Holden M.T.G."/>
            <person name="Prentice M.B."/>
            <person name="Sebaihia M."/>
            <person name="James K.D."/>
            <person name="Churcher C.M."/>
            <person name="Mungall K.L."/>
            <person name="Baker S."/>
            <person name="Basham D."/>
            <person name="Bentley S.D."/>
            <person name="Brooks K."/>
            <person name="Cerdeno-Tarraga A.-M."/>
            <person name="Chillingworth T."/>
            <person name="Cronin A."/>
            <person name="Davies R.M."/>
            <person name="Davis P."/>
            <person name="Dougan G."/>
            <person name="Feltwell T."/>
            <person name="Hamlin N."/>
            <person name="Holroyd S."/>
            <person name="Jagels K."/>
            <person name="Karlyshev A.V."/>
            <person name="Leather S."/>
            <person name="Moule S."/>
            <person name="Oyston P.C.F."/>
            <person name="Quail M.A."/>
            <person name="Rutherford K.M."/>
            <person name="Simmonds M."/>
            <person name="Skelton J."/>
            <person name="Stevens K."/>
            <person name="Whitehead S."/>
            <person name="Barrell B.G."/>
        </authorList>
    </citation>
    <scope>NUCLEOTIDE SEQUENCE [LARGE SCALE GENOMIC DNA]</scope>
    <source>
        <strain>CO-92 / Biovar Orientalis</strain>
    </source>
</reference>
<reference key="2">
    <citation type="journal article" date="2002" name="J. Bacteriol.">
        <title>Genome sequence of Yersinia pestis KIM.</title>
        <authorList>
            <person name="Deng W."/>
            <person name="Burland V."/>
            <person name="Plunkett G. III"/>
            <person name="Boutin A."/>
            <person name="Mayhew G.F."/>
            <person name="Liss P."/>
            <person name="Perna N.T."/>
            <person name="Rose D.J."/>
            <person name="Mau B."/>
            <person name="Zhou S."/>
            <person name="Schwartz D.C."/>
            <person name="Fetherston J.D."/>
            <person name="Lindler L.E."/>
            <person name="Brubaker R.R."/>
            <person name="Plano G.V."/>
            <person name="Straley S.C."/>
            <person name="McDonough K.A."/>
            <person name="Nilles M.L."/>
            <person name="Matson J.S."/>
            <person name="Blattner F.R."/>
            <person name="Perry R.D."/>
        </authorList>
    </citation>
    <scope>NUCLEOTIDE SEQUENCE [LARGE SCALE GENOMIC DNA]</scope>
    <source>
        <strain>KIM10+ / Biovar Mediaevalis</strain>
    </source>
</reference>
<reference key="3">
    <citation type="journal article" date="2004" name="DNA Res.">
        <title>Complete genome sequence of Yersinia pestis strain 91001, an isolate avirulent to humans.</title>
        <authorList>
            <person name="Song Y."/>
            <person name="Tong Z."/>
            <person name="Wang J."/>
            <person name="Wang L."/>
            <person name="Guo Z."/>
            <person name="Han Y."/>
            <person name="Zhang J."/>
            <person name="Pei D."/>
            <person name="Zhou D."/>
            <person name="Qin H."/>
            <person name="Pang X."/>
            <person name="Han Y."/>
            <person name="Zhai J."/>
            <person name="Li M."/>
            <person name="Cui B."/>
            <person name="Qi Z."/>
            <person name="Jin L."/>
            <person name="Dai R."/>
            <person name="Chen F."/>
            <person name="Li S."/>
            <person name="Ye C."/>
            <person name="Du Z."/>
            <person name="Lin W."/>
            <person name="Wang J."/>
            <person name="Yu J."/>
            <person name="Yang H."/>
            <person name="Wang J."/>
            <person name="Huang P."/>
            <person name="Yang R."/>
        </authorList>
    </citation>
    <scope>NUCLEOTIDE SEQUENCE [LARGE SCALE GENOMIC DNA]</scope>
    <source>
        <strain>91001 / Biovar Mediaevalis</strain>
    </source>
</reference>
<comment type="similarity">
    <text evidence="1">Belongs to the bacterial ribosomal protein bL35 family.</text>
</comment>
<protein>
    <recommendedName>
        <fullName evidence="1">Large ribosomal subunit protein bL35</fullName>
    </recommendedName>
    <alternativeName>
        <fullName evidence="2">50S ribosomal protein L35</fullName>
    </alternativeName>
</protein>
<proteinExistence type="inferred from homology"/>